<protein>
    <recommendedName>
        <fullName evidence="1">Large ribosomal subunit protein uL22</fullName>
    </recommendedName>
    <alternativeName>
        <fullName evidence="2">50S ribosomal protein L22</fullName>
    </alternativeName>
</protein>
<proteinExistence type="inferred from homology"/>
<dbReference type="EMBL" id="CP000084">
    <property type="protein sequence ID" value="AAZ21915.1"/>
    <property type="molecule type" value="Genomic_DNA"/>
</dbReference>
<dbReference type="RefSeq" id="WP_006996816.1">
    <property type="nucleotide sequence ID" value="NC_007205.1"/>
</dbReference>
<dbReference type="SMR" id="Q4FLM3"/>
<dbReference type="STRING" id="335992.SAR11_1112"/>
<dbReference type="GeneID" id="66295601"/>
<dbReference type="KEGG" id="pub:SAR11_1112"/>
<dbReference type="eggNOG" id="COG0091">
    <property type="taxonomic scope" value="Bacteria"/>
</dbReference>
<dbReference type="HOGENOM" id="CLU_083987_3_0_5"/>
<dbReference type="OrthoDB" id="9805969at2"/>
<dbReference type="Proteomes" id="UP000002528">
    <property type="component" value="Chromosome"/>
</dbReference>
<dbReference type="GO" id="GO:0022625">
    <property type="term" value="C:cytosolic large ribosomal subunit"/>
    <property type="evidence" value="ECO:0007669"/>
    <property type="project" value="TreeGrafter"/>
</dbReference>
<dbReference type="GO" id="GO:0019843">
    <property type="term" value="F:rRNA binding"/>
    <property type="evidence" value="ECO:0007669"/>
    <property type="project" value="UniProtKB-UniRule"/>
</dbReference>
<dbReference type="GO" id="GO:0003735">
    <property type="term" value="F:structural constituent of ribosome"/>
    <property type="evidence" value="ECO:0007669"/>
    <property type="project" value="InterPro"/>
</dbReference>
<dbReference type="GO" id="GO:0006412">
    <property type="term" value="P:translation"/>
    <property type="evidence" value="ECO:0007669"/>
    <property type="project" value="UniProtKB-UniRule"/>
</dbReference>
<dbReference type="CDD" id="cd00336">
    <property type="entry name" value="Ribosomal_L22"/>
    <property type="match status" value="1"/>
</dbReference>
<dbReference type="Gene3D" id="3.90.470.10">
    <property type="entry name" value="Ribosomal protein L22/L17"/>
    <property type="match status" value="1"/>
</dbReference>
<dbReference type="HAMAP" id="MF_01331_B">
    <property type="entry name" value="Ribosomal_uL22_B"/>
    <property type="match status" value="1"/>
</dbReference>
<dbReference type="InterPro" id="IPR001063">
    <property type="entry name" value="Ribosomal_uL22"/>
</dbReference>
<dbReference type="InterPro" id="IPR005727">
    <property type="entry name" value="Ribosomal_uL22_bac/chlpt-type"/>
</dbReference>
<dbReference type="InterPro" id="IPR047867">
    <property type="entry name" value="Ribosomal_uL22_bac/org-type"/>
</dbReference>
<dbReference type="InterPro" id="IPR036394">
    <property type="entry name" value="Ribosomal_uL22_sf"/>
</dbReference>
<dbReference type="NCBIfam" id="TIGR01044">
    <property type="entry name" value="rplV_bact"/>
    <property type="match status" value="1"/>
</dbReference>
<dbReference type="PANTHER" id="PTHR13501">
    <property type="entry name" value="CHLOROPLAST 50S RIBOSOMAL PROTEIN L22-RELATED"/>
    <property type="match status" value="1"/>
</dbReference>
<dbReference type="PANTHER" id="PTHR13501:SF8">
    <property type="entry name" value="LARGE RIBOSOMAL SUBUNIT PROTEIN UL22M"/>
    <property type="match status" value="1"/>
</dbReference>
<dbReference type="Pfam" id="PF00237">
    <property type="entry name" value="Ribosomal_L22"/>
    <property type="match status" value="1"/>
</dbReference>
<dbReference type="SUPFAM" id="SSF54843">
    <property type="entry name" value="Ribosomal protein L22"/>
    <property type="match status" value="1"/>
</dbReference>
<keyword id="KW-1185">Reference proteome</keyword>
<keyword id="KW-0687">Ribonucleoprotein</keyword>
<keyword id="KW-0689">Ribosomal protein</keyword>
<keyword id="KW-0694">RNA-binding</keyword>
<keyword id="KW-0699">rRNA-binding</keyword>
<name>RL22_PELUB</name>
<comment type="function">
    <text evidence="1">This protein binds specifically to 23S rRNA; its binding is stimulated by other ribosomal proteins, e.g. L4, L17, and L20. It is important during the early stages of 50S assembly. It makes multiple contacts with different domains of the 23S rRNA in the assembled 50S subunit and ribosome (By similarity).</text>
</comment>
<comment type="function">
    <text evidence="1">The globular domain of the protein is located near the polypeptide exit tunnel on the outside of the subunit, while an extended beta-hairpin is found that lines the wall of the exit tunnel in the center of the 70S ribosome.</text>
</comment>
<comment type="subunit">
    <text evidence="1">Part of the 50S ribosomal subunit.</text>
</comment>
<comment type="similarity">
    <text evidence="1">Belongs to the universal ribosomal protein uL22 family.</text>
</comment>
<gene>
    <name evidence="1" type="primary">rplV</name>
    <name type="ordered locus">SAR11_1112</name>
</gene>
<accession>Q4FLM3</accession>
<reference key="1">
    <citation type="journal article" date="2005" name="Science">
        <title>Genome streamlining in a cosmopolitan oceanic bacterium.</title>
        <authorList>
            <person name="Giovannoni S.J."/>
            <person name="Tripp H.J."/>
            <person name="Givan S."/>
            <person name="Podar M."/>
            <person name="Vergin K.L."/>
            <person name="Baptista D."/>
            <person name="Bibbs L."/>
            <person name="Eads J."/>
            <person name="Richardson T.H."/>
            <person name="Noordewier M."/>
            <person name="Rappe M.S."/>
            <person name="Short J.M."/>
            <person name="Carrington J.C."/>
            <person name="Mathur E.J."/>
        </authorList>
    </citation>
    <scope>NUCLEOTIDE SEQUENCE [LARGE SCALE GENOMIC DNA]</scope>
    <source>
        <strain>HTCC1062</strain>
    </source>
</reference>
<organism>
    <name type="scientific">Pelagibacter ubique (strain HTCC1062)</name>
    <dbReference type="NCBI Taxonomy" id="335992"/>
    <lineage>
        <taxon>Bacteria</taxon>
        <taxon>Pseudomonadati</taxon>
        <taxon>Pseudomonadota</taxon>
        <taxon>Alphaproteobacteria</taxon>
        <taxon>Candidatus Pelagibacterales</taxon>
        <taxon>Candidatus Pelagibacteraceae</taxon>
        <taxon>Candidatus Pelagibacter</taxon>
    </lineage>
</organism>
<feature type="chain" id="PRO_0000354501" description="Large ribosomal subunit protein uL22">
    <location>
        <begin position="1"/>
        <end position="132"/>
    </location>
</feature>
<evidence type="ECO:0000255" key="1">
    <source>
        <dbReference type="HAMAP-Rule" id="MF_01331"/>
    </source>
</evidence>
<evidence type="ECO:0000305" key="2"/>
<sequence length="132" mass="14937">MNKKKKINRTKVDTVRSVNNNIRSSVRKLNPILKAIVGKKVDVAIRELQFSAKRITREIRKTVSSAVANAENNNQYDIDKLIVKEAYCGKKVVMKRFRPRAKGRAAPILKPYSTITIILSEAKQMESHGSKS</sequence>